<proteinExistence type="evidence at protein level"/>
<dbReference type="EC" id="3.5.1.13"/>
<dbReference type="PIR" id="S16228">
    <property type="entry name" value="S16228"/>
</dbReference>
<dbReference type="SMR" id="P80008"/>
<dbReference type="GO" id="GO:0047680">
    <property type="term" value="F:aryl-acylamidase activity"/>
    <property type="evidence" value="ECO:0007669"/>
    <property type="project" value="UniProtKB-EC"/>
</dbReference>
<sequence length="28" mass="2949">MDVAEYAAHDATGLAELIREGQVSACEV</sequence>
<reference key="1">
    <citation type="journal article" date="1991" name="Eur. J. Biochem.">
        <title>Purification and characterization of aryl acylamidase from Nocardia globerula.</title>
        <authorList>
            <person name="Toshioka H."/>
            <person name="Nagasawa T."/>
            <person name="Yamada H."/>
        </authorList>
    </citation>
    <scope>PROTEIN SEQUENCE</scope>
    <source>
        <strain>ATCC 21292 / BCRC 13737 / CIP 104776 / NBRC 13510 / KY 3909-92E</strain>
    </source>
</reference>
<protein>
    <recommendedName>
        <fullName>Aryl acylamidase</fullName>
        <ecNumber>3.5.1.13</ecNumber>
    </recommendedName>
</protein>
<accession>P80008</accession>
<organism>
    <name type="scientific">Nocardia globerula</name>
    <dbReference type="NCBI Taxonomy" id="1818"/>
    <lineage>
        <taxon>Bacteria</taxon>
        <taxon>Bacillati</taxon>
        <taxon>Actinomycetota</taxon>
        <taxon>Actinomycetes</taxon>
        <taxon>Mycobacteriales</taxon>
        <taxon>Nocardiaceae</taxon>
        <taxon>Nocardia</taxon>
    </lineage>
</organism>
<comment type="catalytic activity">
    <reaction>
        <text>an anilide + H2O = aniline + a carboxylate + H(+)</text>
        <dbReference type="Rhea" id="RHEA:20297"/>
        <dbReference type="ChEBI" id="CHEBI:13248"/>
        <dbReference type="ChEBI" id="CHEBI:15377"/>
        <dbReference type="ChEBI" id="CHEBI:15378"/>
        <dbReference type="ChEBI" id="CHEBI:17296"/>
        <dbReference type="ChEBI" id="CHEBI:29067"/>
        <dbReference type="EC" id="3.5.1.13"/>
    </reaction>
</comment>
<comment type="subunit">
    <text>Homodimer.</text>
</comment>
<comment type="miscellaneous">
    <text>Also acts on 4-substituted anilides.</text>
</comment>
<name>ARYC_NOCGL</name>
<feature type="chain" id="PRO_0000064688" description="Aryl acylamidase">
    <location>
        <begin position="1"/>
        <end position="28" status="greater than"/>
    </location>
</feature>
<feature type="non-terminal residue">
    <location>
        <position position="28"/>
    </location>
</feature>
<keyword id="KW-0903">Direct protein sequencing</keyword>
<keyword id="KW-0378">Hydrolase</keyword>